<sequence length="448" mass="50004">MASSSCLKQGSVPMNNVCVTPEATYEAVVADPRLFMTSLERLHSLLGTKFMVPIIGGRDLDLHKLFVEVTSRGGINKILNERRWKEVTATFVFPPTATNASYVLRKYYFSLLNNYEQIYFFRSNGQIPPDSMQSPSARPCFIQGAIRPSQELQALTFTPQPKINTAEFLGGSLAGSNVVGVIDGKFESGYLVTVTIGSEQLKGVLYQLLPQNTVSYQTPQQSHGVLPNTLNISANPQGVAGGVTKRRRRRKKSEIKRRDPDHPKPNRSGYNFFFAEQHARLKPLHPGKDRDISRMIGELWNKLNEDEKLIYQGKAMEDKERYRTEMEDYREKKKNGQLISNAVPLQQRLPEQNVDMAEADLPIDEVEEDDEEGDSSGSSGESEPHDDQSIETDPELEEPSLNPSGPNLNPNPTEIVVAPKEKNGDVVMETSPLKKADEPTVAVTAEQN</sequence>
<reference key="1">
    <citation type="journal article" date="2000" name="Nature">
        <title>Sequence and analysis of chromosome 1 of the plant Arabidopsis thaliana.</title>
        <authorList>
            <person name="Theologis A."/>
            <person name="Ecker J.R."/>
            <person name="Palm C.J."/>
            <person name="Federspiel N.A."/>
            <person name="Kaul S."/>
            <person name="White O."/>
            <person name="Alonso J."/>
            <person name="Altafi H."/>
            <person name="Araujo R."/>
            <person name="Bowman C.L."/>
            <person name="Brooks S.Y."/>
            <person name="Buehler E."/>
            <person name="Chan A."/>
            <person name="Chao Q."/>
            <person name="Chen H."/>
            <person name="Cheuk R.F."/>
            <person name="Chin C.W."/>
            <person name="Chung M.K."/>
            <person name="Conn L."/>
            <person name="Conway A.B."/>
            <person name="Conway A.R."/>
            <person name="Creasy T.H."/>
            <person name="Dewar K."/>
            <person name="Dunn P."/>
            <person name="Etgu P."/>
            <person name="Feldblyum T.V."/>
            <person name="Feng J.-D."/>
            <person name="Fong B."/>
            <person name="Fujii C.Y."/>
            <person name="Gill J.E."/>
            <person name="Goldsmith A.D."/>
            <person name="Haas B."/>
            <person name="Hansen N.F."/>
            <person name="Hughes B."/>
            <person name="Huizar L."/>
            <person name="Hunter J.L."/>
            <person name="Jenkins J."/>
            <person name="Johnson-Hopson C."/>
            <person name="Khan S."/>
            <person name="Khaykin E."/>
            <person name="Kim C.J."/>
            <person name="Koo H.L."/>
            <person name="Kremenetskaia I."/>
            <person name="Kurtz D.B."/>
            <person name="Kwan A."/>
            <person name="Lam B."/>
            <person name="Langin-Hooper S."/>
            <person name="Lee A."/>
            <person name="Lee J.M."/>
            <person name="Lenz C.A."/>
            <person name="Li J.H."/>
            <person name="Li Y.-P."/>
            <person name="Lin X."/>
            <person name="Liu S.X."/>
            <person name="Liu Z.A."/>
            <person name="Luros J.S."/>
            <person name="Maiti R."/>
            <person name="Marziali A."/>
            <person name="Militscher J."/>
            <person name="Miranda M."/>
            <person name="Nguyen M."/>
            <person name="Nierman W.C."/>
            <person name="Osborne B.I."/>
            <person name="Pai G."/>
            <person name="Peterson J."/>
            <person name="Pham P.K."/>
            <person name="Rizzo M."/>
            <person name="Rooney T."/>
            <person name="Rowley D."/>
            <person name="Sakano H."/>
            <person name="Salzberg S.L."/>
            <person name="Schwartz J.R."/>
            <person name="Shinn P."/>
            <person name="Southwick A.M."/>
            <person name="Sun H."/>
            <person name="Tallon L.J."/>
            <person name="Tambunga G."/>
            <person name="Toriumi M.J."/>
            <person name="Town C.D."/>
            <person name="Utterback T."/>
            <person name="Van Aken S."/>
            <person name="Vaysberg M."/>
            <person name="Vysotskaia V.S."/>
            <person name="Walker M."/>
            <person name="Wu D."/>
            <person name="Yu G."/>
            <person name="Fraser C.M."/>
            <person name="Venter J.C."/>
            <person name="Davis R.W."/>
        </authorList>
    </citation>
    <scope>NUCLEOTIDE SEQUENCE [LARGE SCALE GENOMIC DNA]</scope>
    <source>
        <strain>cv. Columbia</strain>
    </source>
</reference>
<reference key="2">
    <citation type="journal article" date="2017" name="Plant J.">
        <title>Araport11: a complete reannotation of the Arabidopsis thaliana reference genome.</title>
        <authorList>
            <person name="Cheng C.Y."/>
            <person name="Krishnakumar V."/>
            <person name="Chan A.P."/>
            <person name="Thibaud-Nissen F."/>
            <person name="Schobel S."/>
            <person name="Town C.D."/>
        </authorList>
    </citation>
    <scope>GENOME REANNOTATION</scope>
    <source>
        <strain>cv. Columbia</strain>
    </source>
</reference>
<reference key="3">
    <citation type="submission" date="2004-12" db="EMBL/GenBank/DDBJ databases">
        <title>Arabidopsis ORF clones.</title>
        <authorList>
            <person name="Cheuk R.F."/>
            <person name="Chen H."/>
            <person name="Kim C.J."/>
            <person name="Shinn P."/>
            <person name="Ecker J.R."/>
        </authorList>
    </citation>
    <scope>NUCLEOTIDE SEQUENCE [LARGE SCALE MRNA]</scope>
    <source>
        <strain>cv. Columbia</strain>
    </source>
</reference>
<reference key="4">
    <citation type="submission" date="2009-03" db="EMBL/GenBank/DDBJ databases">
        <title>ORF cloning and analysis of Arabidopsis transcription factor genes.</title>
        <authorList>
            <person name="Fujita M."/>
            <person name="Mizukado S."/>
            <person name="Seki M."/>
            <person name="Shinozaki K."/>
            <person name="Mitsuda N."/>
            <person name="Takiguchi Y."/>
            <person name="Takagi M."/>
        </authorList>
    </citation>
    <scope>NUCLEOTIDE SEQUENCE [LARGE SCALE MRNA]</scope>
</reference>
<keyword id="KW-0238">DNA-binding</keyword>
<keyword id="KW-0539">Nucleus</keyword>
<keyword id="KW-1185">Reference proteome</keyword>
<keyword id="KW-0804">Transcription</keyword>
<keyword id="KW-0805">Transcription regulation</keyword>
<organism>
    <name type="scientific">Arabidopsis thaliana</name>
    <name type="common">Mouse-ear cress</name>
    <dbReference type="NCBI Taxonomy" id="3702"/>
    <lineage>
        <taxon>Eukaryota</taxon>
        <taxon>Viridiplantae</taxon>
        <taxon>Streptophyta</taxon>
        <taxon>Embryophyta</taxon>
        <taxon>Tracheophyta</taxon>
        <taxon>Spermatophyta</taxon>
        <taxon>Magnoliopsida</taxon>
        <taxon>eudicotyledons</taxon>
        <taxon>Gunneridae</taxon>
        <taxon>Pentapetalae</taxon>
        <taxon>rosids</taxon>
        <taxon>malvids</taxon>
        <taxon>Brassicales</taxon>
        <taxon>Brassicaceae</taxon>
        <taxon>Camelineae</taxon>
        <taxon>Arabidopsis</taxon>
    </lineage>
</organism>
<evidence type="ECO:0000250" key="1"/>
<evidence type="ECO:0000255" key="2">
    <source>
        <dbReference type="PROSITE-ProRule" id="PRU00267"/>
    </source>
</evidence>
<evidence type="ECO:0000255" key="3">
    <source>
        <dbReference type="PROSITE-ProRule" id="PRU00355"/>
    </source>
</evidence>
<evidence type="ECO:0000256" key="4">
    <source>
        <dbReference type="SAM" id="MobiDB-lite"/>
    </source>
</evidence>
<evidence type="ECO:0000305" key="5"/>
<dbReference type="EMBL" id="AC004809">
    <property type="protein sequence ID" value="AAF40449.1"/>
    <property type="molecule type" value="Genomic_DNA"/>
</dbReference>
<dbReference type="EMBL" id="CP002684">
    <property type="protein sequence ID" value="AEE27755.1"/>
    <property type="molecule type" value="Genomic_DNA"/>
</dbReference>
<dbReference type="EMBL" id="BT020255">
    <property type="protein sequence ID" value="AAV84476.1"/>
    <property type="molecule type" value="mRNA"/>
</dbReference>
<dbReference type="EMBL" id="BT020442">
    <property type="protein sequence ID" value="AAW30021.1"/>
    <property type="molecule type" value="mRNA"/>
</dbReference>
<dbReference type="EMBL" id="AB493433">
    <property type="protein sequence ID" value="BAH30271.1"/>
    <property type="molecule type" value="mRNA"/>
</dbReference>
<dbReference type="PIR" id="B86182">
    <property type="entry name" value="B86182"/>
</dbReference>
<dbReference type="RefSeq" id="NP_171980.1">
    <property type="nucleotide sequence ID" value="NM_100366.4"/>
</dbReference>
<dbReference type="SMR" id="Q9MAT6"/>
<dbReference type="BioGRID" id="24623">
    <property type="interactions" value="6"/>
</dbReference>
<dbReference type="FunCoup" id="Q9MAT6">
    <property type="interactions" value="1216"/>
</dbReference>
<dbReference type="IntAct" id="Q9MAT6">
    <property type="interactions" value="4"/>
</dbReference>
<dbReference type="STRING" id="3702.Q9MAT6"/>
<dbReference type="iPTMnet" id="Q9MAT6"/>
<dbReference type="PaxDb" id="3702-AT1G04880.1"/>
<dbReference type="ProteomicsDB" id="230354"/>
<dbReference type="EnsemblPlants" id="AT1G04880.1">
    <property type="protein sequence ID" value="AT1G04880.1"/>
    <property type="gene ID" value="AT1G04880"/>
</dbReference>
<dbReference type="GeneID" id="839388"/>
<dbReference type="Gramene" id="AT1G04880.1">
    <property type="protein sequence ID" value="AT1G04880.1"/>
    <property type="gene ID" value="AT1G04880"/>
</dbReference>
<dbReference type="KEGG" id="ath:AT1G04880"/>
<dbReference type="Araport" id="AT1G04880"/>
<dbReference type="TAIR" id="AT1G04880">
    <property type="gene designation" value="HMGBD15"/>
</dbReference>
<dbReference type="eggNOG" id="KOG0381">
    <property type="taxonomic scope" value="Eukaryota"/>
</dbReference>
<dbReference type="eggNOG" id="KOG2744">
    <property type="taxonomic scope" value="Eukaryota"/>
</dbReference>
<dbReference type="HOGENOM" id="CLU_035371_1_0_1"/>
<dbReference type="InParanoid" id="Q9MAT6"/>
<dbReference type="OMA" id="EQNVDMA"/>
<dbReference type="OrthoDB" id="338531at2759"/>
<dbReference type="PhylomeDB" id="Q9MAT6"/>
<dbReference type="PRO" id="PR:Q9MAT6"/>
<dbReference type="Proteomes" id="UP000006548">
    <property type="component" value="Chromosome 1"/>
</dbReference>
<dbReference type="ExpressionAtlas" id="Q9MAT6">
    <property type="expression patterns" value="baseline and differential"/>
</dbReference>
<dbReference type="GO" id="GO:0005634">
    <property type="term" value="C:nucleus"/>
    <property type="evidence" value="ECO:0007669"/>
    <property type="project" value="UniProtKB-SubCell"/>
</dbReference>
<dbReference type="GO" id="GO:0090406">
    <property type="term" value="C:pollen tube"/>
    <property type="evidence" value="ECO:0000314"/>
    <property type="project" value="TAIR"/>
</dbReference>
<dbReference type="GO" id="GO:0003700">
    <property type="term" value="F:DNA-binding transcription factor activity"/>
    <property type="evidence" value="ECO:0000250"/>
    <property type="project" value="TAIR"/>
</dbReference>
<dbReference type="GO" id="GO:0000400">
    <property type="term" value="F:four-way junction DNA binding"/>
    <property type="evidence" value="ECO:0000314"/>
    <property type="project" value="TAIR"/>
</dbReference>
<dbReference type="GO" id="GO:0000976">
    <property type="term" value="F:transcription cis-regulatory region binding"/>
    <property type="evidence" value="ECO:0000353"/>
    <property type="project" value="TAIR"/>
</dbReference>
<dbReference type="GO" id="GO:0019760">
    <property type="term" value="P:glucosinolate metabolic process"/>
    <property type="evidence" value="ECO:0000315"/>
    <property type="project" value="TAIR"/>
</dbReference>
<dbReference type="GO" id="GO:0009846">
    <property type="term" value="P:pollen germination"/>
    <property type="evidence" value="ECO:0000315"/>
    <property type="project" value="TAIR"/>
</dbReference>
<dbReference type="GO" id="GO:0009860">
    <property type="term" value="P:pollen tube growth"/>
    <property type="evidence" value="ECO:0000315"/>
    <property type="project" value="TAIR"/>
</dbReference>
<dbReference type="GO" id="GO:0006355">
    <property type="term" value="P:regulation of DNA-templated transcription"/>
    <property type="evidence" value="ECO:0000304"/>
    <property type="project" value="TAIR"/>
</dbReference>
<dbReference type="CDD" id="cd16872">
    <property type="entry name" value="ARID_HMGB9-like"/>
    <property type="match status" value="1"/>
</dbReference>
<dbReference type="CDD" id="cd22009">
    <property type="entry name" value="HMG-box_AtHMGB9-like"/>
    <property type="match status" value="1"/>
</dbReference>
<dbReference type="FunFam" id="1.10.150.60:FF:000022">
    <property type="entry name" value="High mobility group B protein 15"/>
    <property type="match status" value="1"/>
</dbReference>
<dbReference type="FunFam" id="1.10.30.10:FF:000055">
    <property type="entry name" value="High mobility group B protein 15"/>
    <property type="match status" value="1"/>
</dbReference>
<dbReference type="Gene3D" id="1.10.150.60">
    <property type="entry name" value="ARID DNA-binding domain"/>
    <property type="match status" value="1"/>
</dbReference>
<dbReference type="Gene3D" id="1.10.30.10">
    <property type="entry name" value="High mobility group box domain"/>
    <property type="match status" value="1"/>
</dbReference>
<dbReference type="InterPro" id="IPR001606">
    <property type="entry name" value="ARID_dom"/>
</dbReference>
<dbReference type="InterPro" id="IPR036431">
    <property type="entry name" value="ARID_dom_sf"/>
</dbReference>
<dbReference type="InterPro" id="IPR045303">
    <property type="entry name" value="ARID_HMGB9-like"/>
</dbReference>
<dbReference type="InterPro" id="IPR009071">
    <property type="entry name" value="HMG_box_dom"/>
</dbReference>
<dbReference type="InterPro" id="IPR036910">
    <property type="entry name" value="HMG_box_dom_sf"/>
</dbReference>
<dbReference type="PANTHER" id="PTHR46691:SF3">
    <property type="entry name" value="HIGH MOBILITY GROUP B PROTEIN 15"/>
    <property type="match status" value="1"/>
</dbReference>
<dbReference type="PANTHER" id="PTHR46691">
    <property type="entry name" value="HIGH MOBILITY GROUP B PROTEIN 9"/>
    <property type="match status" value="1"/>
</dbReference>
<dbReference type="Pfam" id="PF01388">
    <property type="entry name" value="ARID"/>
    <property type="match status" value="1"/>
</dbReference>
<dbReference type="Pfam" id="PF00505">
    <property type="entry name" value="HMG_box"/>
    <property type="match status" value="1"/>
</dbReference>
<dbReference type="SMART" id="SM01014">
    <property type="entry name" value="ARID"/>
    <property type="match status" value="1"/>
</dbReference>
<dbReference type="SMART" id="SM00501">
    <property type="entry name" value="BRIGHT"/>
    <property type="match status" value="1"/>
</dbReference>
<dbReference type="SMART" id="SM00398">
    <property type="entry name" value="HMG"/>
    <property type="match status" value="1"/>
</dbReference>
<dbReference type="SUPFAM" id="SSF46774">
    <property type="entry name" value="ARID-like"/>
    <property type="match status" value="1"/>
</dbReference>
<dbReference type="SUPFAM" id="SSF47095">
    <property type="entry name" value="HMG-box"/>
    <property type="match status" value="1"/>
</dbReference>
<dbReference type="PROSITE" id="PS51011">
    <property type="entry name" value="ARID"/>
    <property type="match status" value="1"/>
</dbReference>
<dbReference type="PROSITE" id="PS50118">
    <property type="entry name" value="HMG_BOX_2"/>
    <property type="match status" value="1"/>
</dbReference>
<accession>Q9MAT6</accession>
<comment type="function">
    <text evidence="1">Binds preferentially DNA with A/T-rich content.</text>
</comment>
<comment type="subcellular location">
    <subcellularLocation>
        <location evidence="2 3">Nucleus</location>
    </subcellularLocation>
</comment>
<comment type="similarity">
    <text evidence="5">Belongs to the HMGB family.</text>
</comment>
<proteinExistence type="evidence at transcript level"/>
<protein>
    <recommendedName>
        <fullName>High mobility group B protein 15</fullName>
    </recommendedName>
    <alternativeName>
        <fullName>Nucleosome/chromatin assembly factor group D 15</fullName>
    </alternativeName>
</protein>
<gene>
    <name type="primary">HMGB15</name>
    <name type="synonym">NFD15</name>
    <name type="ordered locus">At1g04880</name>
    <name type="ORF">F13M7.13</name>
</gene>
<feature type="chain" id="PRO_0000399940" description="High mobility group B protein 15">
    <location>
        <begin position="1"/>
        <end position="448"/>
    </location>
</feature>
<feature type="domain" description="ARID" evidence="3">
    <location>
        <begin position="29"/>
        <end position="120"/>
    </location>
</feature>
<feature type="DNA-binding region" description="HMG box" evidence="2">
    <location>
        <begin position="263"/>
        <end position="330"/>
    </location>
</feature>
<feature type="region of interest" description="Disordered" evidence="4">
    <location>
        <begin position="219"/>
        <end position="270"/>
    </location>
</feature>
<feature type="region of interest" description="Disordered" evidence="4">
    <location>
        <begin position="333"/>
        <end position="352"/>
    </location>
</feature>
<feature type="region of interest" description="Disordered" evidence="4">
    <location>
        <begin position="366"/>
        <end position="448"/>
    </location>
</feature>
<feature type="compositionally biased region" description="Polar residues" evidence="4">
    <location>
        <begin position="219"/>
        <end position="236"/>
    </location>
</feature>
<feature type="compositionally biased region" description="Basic residues" evidence="4">
    <location>
        <begin position="244"/>
        <end position="255"/>
    </location>
</feature>
<feature type="compositionally biased region" description="Acidic residues" evidence="4">
    <location>
        <begin position="389"/>
        <end position="398"/>
    </location>
</feature>
<feature type="compositionally biased region" description="Low complexity" evidence="4">
    <location>
        <begin position="399"/>
        <end position="412"/>
    </location>
</feature>
<name>HMG15_ARATH</name>